<gene>
    <name evidence="1" type="primary">idi</name>
    <name type="ordered locus">Cgl2305</name>
    <name type="ordered locus">cg2531</name>
</gene>
<accession>Q8NN99</accession>
<proteinExistence type="inferred from homology"/>
<name>IDI_CORGL</name>
<feature type="chain" id="PRO_0000205247" description="Isopentenyl-diphosphate Delta-isomerase">
    <location>
        <begin position="1"/>
        <end position="189"/>
    </location>
</feature>
<feature type="domain" description="Nudix hydrolase">
    <location>
        <begin position="32"/>
        <end position="171"/>
    </location>
</feature>
<feature type="active site" evidence="1">
    <location>
        <position position="69"/>
    </location>
</feature>
<feature type="active site" evidence="1">
    <location>
        <position position="121"/>
    </location>
</feature>
<feature type="binding site" evidence="1">
    <location>
        <position position="27"/>
    </location>
    <ligand>
        <name>Mn(2+)</name>
        <dbReference type="ChEBI" id="CHEBI:29035"/>
    </ligand>
</feature>
<feature type="binding site" evidence="1">
    <location>
        <position position="34"/>
    </location>
    <ligand>
        <name>Mn(2+)</name>
        <dbReference type="ChEBI" id="CHEBI:29035"/>
    </ligand>
</feature>
<feature type="binding site" evidence="1">
    <location>
        <position position="69"/>
    </location>
    <ligand>
        <name>Mg(2+)</name>
        <dbReference type="ChEBI" id="CHEBI:18420"/>
    </ligand>
</feature>
<feature type="binding site" evidence="1">
    <location>
        <position position="71"/>
    </location>
    <ligand>
        <name>Mn(2+)</name>
        <dbReference type="ChEBI" id="CHEBI:29035"/>
    </ligand>
</feature>
<feature type="binding site" evidence="1">
    <location>
        <position position="89"/>
    </location>
    <ligand>
        <name>Mg(2+)</name>
        <dbReference type="ChEBI" id="CHEBI:18420"/>
    </ligand>
</feature>
<feature type="binding site" evidence="1">
    <location>
        <position position="119"/>
    </location>
    <ligand>
        <name>Mn(2+)</name>
        <dbReference type="ChEBI" id="CHEBI:29035"/>
    </ligand>
</feature>
<feature type="binding site" evidence="1">
    <location>
        <position position="121"/>
    </location>
    <ligand>
        <name>Mn(2+)</name>
        <dbReference type="ChEBI" id="CHEBI:29035"/>
    </ligand>
</feature>
<dbReference type="EC" id="5.3.3.2" evidence="1"/>
<dbReference type="EMBL" id="BA000036">
    <property type="protein sequence ID" value="BAB99698.1"/>
    <property type="status" value="ALT_INIT"/>
    <property type="molecule type" value="Genomic_DNA"/>
</dbReference>
<dbReference type="EMBL" id="BX927154">
    <property type="protein sequence ID" value="CAF20647.1"/>
    <property type="status" value="ALT_INIT"/>
    <property type="molecule type" value="Genomic_DNA"/>
</dbReference>
<dbReference type="RefSeq" id="NP_601504.2">
    <property type="nucleotide sequence ID" value="NC_003450.3"/>
</dbReference>
<dbReference type="RefSeq" id="WP_020948619.1">
    <property type="nucleotide sequence ID" value="NC_006958.1"/>
</dbReference>
<dbReference type="SMR" id="Q8NN99"/>
<dbReference type="STRING" id="196627.cg2531"/>
<dbReference type="GeneID" id="1020256"/>
<dbReference type="KEGG" id="cgb:cg2531"/>
<dbReference type="KEGG" id="cgl:Cgl2305"/>
<dbReference type="PATRIC" id="fig|196627.13.peg.2239"/>
<dbReference type="eggNOG" id="COG1443">
    <property type="taxonomic scope" value="Bacteria"/>
</dbReference>
<dbReference type="HOGENOM" id="CLU_060552_2_0_11"/>
<dbReference type="OrthoDB" id="9809458at2"/>
<dbReference type="BioCyc" id="CORYNE:G18NG-11902-MONOMER"/>
<dbReference type="UniPathway" id="UPA00059">
    <property type="reaction ID" value="UER00104"/>
</dbReference>
<dbReference type="Proteomes" id="UP000000582">
    <property type="component" value="Chromosome"/>
</dbReference>
<dbReference type="Proteomes" id="UP000001009">
    <property type="component" value="Chromosome"/>
</dbReference>
<dbReference type="GO" id="GO:0005737">
    <property type="term" value="C:cytoplasm"/>
    <property type="evidence" value="ECO:0007669"/>
    <property type="project" value="UniProtKB-SubCell"/>
</dbReference>
<dbReference type="GO" id="GO:0004452">
    <property type="term" value="F:isopentenyl-diphosphate delta-isomerase activity"/>
    <property type="evidence" value="ECO:0007669"/>
    <property type="project" value="UniProtKB-UniRule"/>
</dbReference>
<dbReference type="GO" id="GO:0046872">
    <property type="term" value="F:metal ion binding"/>
    <property type="evidence" value="ECO:0007669"/>
    <property type="project" value="UniProtKB-KW"/>
</dbReference>
<dbReference type="GO" id="GO:0050992">
    <property type="term" value="P:dimethylallyl diphosphate biosynthetic process"/>
    <property type="evidence" value="ECO:0007669"/>
    <property type="project" value="UniProtKB-UniRule"/>
</dbReference>
<dbReference type="GO" id="GO:0008299">
    <property type="term" value="P:isoprenoid biosynthetic process"/>
    <property type="evidence" value="ECO:0007669"/>
    <property type="project" value="UniProtKB-KW"/>
</dbReference>
<dbReference type="CDD" id="cd02885">
    <property type="entry name" value="NUDIX_IPP_Isomerase"/>
    <property type="match status" value="1"/>
</dbReference>
<dbReference type="Gene3D" id="3.90.79.10">
    <property type="entry name" value="Nucleoside Triphosphate Pyrophosphohydrolase"/>
    <property type="match status" value="1"/>
</dbReference>
<dbReference type="HAMAP" id="MF_00202">
    <property type="entry name" value="Idi"/>
    <property type="match status" value="1"/>
</dbReference>
<dbReference type="InterPro" id="IPR056375">
    <property type="entry name" value="Idi_bact"/>
</dbReference>
<dbReference type="InterPro" id="IPR011876">
    <property type="entry name" value="IsopentenylPP_isomerase_typ1"/>
</dbReference>
<dbReference type="InterPro" id="IPR015797">
    <property type="entry name" value="NUDIX_hydrolase-like_dom_sf"/>
</dbReference>
<dbReference type="InterPro" id="IPR000086">
    <property type="entry name" value="NUDIX_hydrolase_dom"/>
</dbReference>
<dbReference type="NCBIfam" id="TIGR02150">
    <property type="entry name" value="IPP_isom_1"/>
    <property type="match status" value="1"/>
</dbReference>
<dbReference type="NCBIfam" id="NF002995">
    <property type="entry name" value="PRK03759.1"/>
    <property type="match status" value="1"/>
</dbReference>
<dbReference type="PANTHER" id="PTHR10885">
    <property type="entry name" value="ISOPENTENYL-DIPHOSPHATE DELTA-ISOMERASE"/>
    <property type="match status" value="1"/>
</dbReference>
<dbReference type="PANTHER" id="PTHR10885:SF0">
    <property type="entry name" value="ISOPENTENYL-DIPHOSPHATE DELTA-ISOMERASE"/>
    <property type="match status" value="1"/>
</dbReference>
<dbReference type="Pfam" id="PF00293">
    <property type="entry name" value="NUDIX"/>
    <property type="match status" value="1"/>
</dbReference>
<dbReference type="PIRSF" id="PIRSF018427">
    <property type="entry name" value="Isopntndiph_ism"/>
    <property type="match status" value="1"/>
</dbReference>
<dbReference type="SUPFAM" id="SSF55811">
    <property type="entry name" value="Nudix"/>
    <property type="match status" value="1"/>
</dbReference>
<dbReference type="PROSITE" id="PS51462">
    <property type="entry name" value="NUDIX"/>
    <property type="match status" value="1"/>
</dbReference>
<organism>
    <name type="scientific">Corynebacterium glutamicum (strain ATCC 13032 / DSM 20300 / JCM 1318 / BCRC 11384 / CCUG 27702 / LMG 3730 / NBRC 12168 / NCIMB 10025 / NRRL B-2784 / 534)</name>
    <dbReference type="NCBI Taxonomy" id="196627"/>
    <lineage>
        <taxon>Bacteria</taxon>
        <taxon>Bacillati</taxon>
        <taxon>Actinomycetota</taxon>
        <taxon>Actinomycetes</taxon>
        <taxon>Mycobacteriales</taxon>
        <taxon>Corynebacteriaceae</taxon>
        <taxon>Corynebacterium</taxon>
    </lineage>
</organism>
<comment type="function">
    <text evidence="1">Catalyzes the 1,3-allylic rearrangement of the homoallylic substrate isopentenyl (IPP) to its highly electrophilic allylic isomer, dimethylallyl diphosphate (DMAPP).</text>
</comment>
<comment type="catalytic activity">
    <reaction evidence="1">
        <text>isopentenyl diphosphate = dimethylallyl diphosphate</text>
        <dbReference type="Rhea" id="RHEA:23284"/>
        <dbReference type="ChEBI" id="CHEBI:57623"/>
        <dbReference type="ChEBI" id="CHEBI:128769"/>
        <dbReference type="EC" id="5.3.3.2"/>
    </reaction>
</comment>
<comment type="cofactor">
    <cofactor evidence="1">
        <name>Mg(2+)</name>
        <dbReference type="ChEBI" id="CHEBI:18420"/>
    </cofactor>
    <text evidence="1">Binds 1 Mg(2+) ion per subunit. The magnesium ion binds only when substrate is bound.</text>
</comment>
<comment type="cofactor">
    <cofactor evidence="1">
        <name>Mn(2+)</name>
        <dbReference type="ChEBI" id="CHEBI:29035"/>
    </cofactor>
    <text evidence="1">Binds 1 Mn(2+) ion per subunit.</text>
</comment>
<comment type="pathway">
    <text evidence="1">Isoprenoid biosynthesis; dimethylallyl diphosphate biosynthesis; dimethylallyl diphosphate from isopentenyl diphosphate: step 1/1.</text>
</comment>
<comment type="subcellular location">
    <subcellularLocation>
        <location evidence="1">Cytoplasm</location>
    </subcellularLocation>
</comment>
<comment type="similarity">
    <text evidence="1">Belongs to the IPP isomerase type 1 family.</text>
</comment>
<comment type="sequence caution" evidence="2">
    <conflict type="erroneous initiation">
        <sequence resource="EMBL-CDS" id="BAB99698"/>
    </conflict>
</comment>
<comment type="sequence caution" evidence="2">
    <conflict type="erroneous initiation">
        <sequence resource="EMBL-CDS" id="CAF20647"/>
    </conflict>
</comment>
<evidence type="ECO:0000255" key="1">
    <source>
        <dbReference type="HAMAP-Rule" id="MF_00202"/>
    </source>
</evidence>
<evidence type="ECO:0000305" key="2"/>
<protein>
    <recommendedName>
        <fullName evidence="1">Isopentenyl-diphosphate Delta-isomerase</fullName>
        <shortName evidence="1">IPP isomerase</shortName>
        <ecNumber evidence="1">5.3.3.2</ecNumber>
    </recommendedName>
    <alternativeName>
        <fullName evidence="1">IPP:DMAPP isomerase</fullName>
    </alternativeName>
    <alternativeName>
        <fullName evidence="1">Isopentenyl pyrophosphate isomerase</fullName>
    </alternativeName>
</protein>
<reference key="1">
    <citation type="journal article" date="2003" name="Appl. Microbiol. Biotechnol.">
        <title>The Corynebacterium glutamicum genome: features and impacts on biotechnological processes.</title>
        <authorList>
            <person name="Ikeda M."/>
            <person name="Nakagawa S."/>
        </authorList>
    </citation>
    <scope>NUCLEOTIDE SEQUENCE [LARGE SCALE GENOMIC DNA]</scope>
    <source>
        <strain>ATCC 13032 / DSM 20300 / JCM 1318 / BCRC 11384 / CCUG 27702 / LMG 3730 / NBRC 12168 / NCIMB 10025 / NRRL B-2784 / 534</strain>
    </source>
</reference>
<reference key="2">
    <citation type="journal article" date="2003" name="J. Biotechnol.">
        <title>The complete Corynebacterium glutamicum ATCC 13032 genome sequence and its impact on the production of L-aspartate-derived amino acids and vitamins.</title>
        <authorList>
            <person name="Kalinowski J."/>
            <person name="Bathe B."/>
            <person name="Bartels D."/>
            <person name="Bischoff N."/>
            <person name="Bott M."/>
            <person name="Burkovski A."/>
            <person name="Dusch N."/>
            <person name="Eggeling L."/>
            <person name="Eikmanns B.J."/>
            <person name="Gaigalat L."/>
            <person name="Goesmann A."/>
            <person name="Hartmann M."/>
            <person name="Huthmacher K."/>
            <person name="Kraemer R."/>
            <person name="Linke B."/>
            <person name="McHardy A.C."/>
            <person name="Meyer F."/>
            <person name="Moeckel B."/>
            <person name="Pfefferle W."/>
            <person name="Puehler A."/>
            <person name="Rey D.A."/>
            <person name="Rueckert C."/>
            <person name="Rupp O."/>
            <person name="Sahm H."/>
            <person name="Wendisch V.F."/>
            <person name="Wiegraebe I."/>
            <person name="Tauch A."/>
        </authorList>
    </citation>
    <scope>NUCLEOTIDE SEQUENCE [LARGE SCALE GENOMIC DNA]</scope>
    <source>
        <strain>ATCC 13032 / DSM 20300 / JCM 1318 / BCRC 11384 / CCUG 27702 / LMG 3730 / NBRC 12168 / NCIMB 10025 / NRRL B-2784 / 534</strain>
    </source>
</reference>
<sequence length="189" mass="21121">MTTEVELVVLADSEGNPIGTAPKATVHTKDTPLHFAFSTYILNPRGELLVTRRALSKKTWPGVWTNSMCGHPGPDETNADAIRRRGVDELGLEVDSFLDIQEILPDYQYRAVDASGIVEWELCPVHLVRLAVGEFVEPLDDEVEEFEWAEPQKLFDAVDATPFVFSPWLVDQLSAPELRQAILEAFDAE</sequence>
<keyword id="KW-0963">Cytoplasm</keyword>
<keyword id="KW-0413">Isomerase</keyword>
<keyword id="KW-0414">Isoprene biosynthesis</keyword>
<keyword id="KW-0460">Magnesium</keyword>
<keyword id="KW-0464">Manganese</keyword>
<keyword id="KW-0479">Metal-binding</keyword>
<keyword id="KW-1185">Reference proteome</keyword>